<organism>
    <name type="scientific">Janthinobacterium sp. (strain Marseille)</name>
    <name type="common">Minibacterium massiliensis</name>
    <dbReference type="NCBI Taxonomy" id="375286"/>
    <lineage>
        <taxon>Bacteria</taxon>
        <taxon>Pseudomonadati</taxon>
        <taxon>Pseudomonadota</taxon>
        <taxon>Betaproteobacteria</taxon>
        <taxon>Burkholderiales</taxon>
        <taxon>Oxalobacteraceae</taxon>
        <taxon>Janthinobacterium</taxon>
    </lineage>
</organism>
<feature type="chain" id="PRO_0000335365" description="Ribosomal RNA small subunit methyltransferase G">
    <location>
        <begin position="1"/>
        <end position="220"/>
    </location>
</feature>
<feature type="binding site" evidence="1">
    <location>
        <position position="82"/>
    </location>
    <ligand>
        <name>S-adenosyl-L-methionine</name>
        <dbReference type="ChEBI" id="CHEBI:59789"/>
    </ligand>
</feature>
<feature type="binding site" evidence="1">
    <location>
        <position position="87"/>
    </location>
    <ligand>
        <name>S-adenosyl-L-methionine</name>
        <dbReference type="ChEBI" id="CHEBI:59789"/>
    </ligand>
</feature>
<feature type="binding site" evidence="1">
    <location>
        <begin position="137"/>
        <end position="138"/>
    </location>
    <ligand>
        <name>S-adenosyl-L-methionine</name>
        <dbReference type="ChEBI" id="CHEBI:59789"/>
    </ligand>
</feature>
<feature type="binding site" evidence="1">
    <location>
        <position position="152"/>
    </location>
    <ligand>
        <name>S-adenosyl-L-methionine</name>
        <dbReference type="ChEBI" id="CHEBI:59789"/>
    </ligand>
</feature>
<name>RSMG_JANMA</name>
<proteinExistence type="inferred from homology"/>
<evidence type="ECO:0000255" key="1">
    <source>
        <dbReference type="HAMAP-Rule" id="MF_00074"/>
    </source>
</evidence>
<reference key="1">
    <citation type="journal article" date="2007" name="PLoS Genet.">
        <title>Genome analysis of Minibacterium massiliensis highlights the convergent evolution of water-living bacteria.</title>
        <authorList>
            <person name="Audic S."/>
            <person name="Robert C."/>
            <person name="Campagna B."/>
            <person name="Parinello H."/>
            <person name="Claverie J.-M."/>
            <person name="Raoult D."/>
            <person name="Drancourt M."/>
        </authorList>
    </citation>
    <scope>NUCLEOTIDE SEQUENCE [LARGE SCALE GENOMIC DNA]</scope>
    <source>
        <strain>Marseille</strain>
    </source>
</reference>
<comment type="function">
    <text evidence="1">Specifically methylates the N7 position of guanine in position 527 of 16S rRNA.</text>
</comment>
<comment type="catalytic activity">
    <reaction evidence="1">
        <text>guanosine(527) in 16S rRNA + S-adenosyl-L-methionine = N(7)-methylguanosine(527) in 16S rRNA + S-adenosyl-L-homocysteine</text>
        <dbReference type="Rhea" id="RHEA:42732"/>
        <dbReference type="Rhea" id="RHEA-COMP:10209"/>
        <dbReference type="Rhea" id="RHEA-COMP:10210"/>
        <dbReference type="ChEBI" id="CHEBI:57856"/>
        <dbReference type="ChEBI" id="CHEBI:59789"/>
        <dbReference type="ChEBI" id="CHEBI:74269"/>
        <dbReference type="ChEBI" id="CHEBI:74480"/>
        <dbReference type="EC" id="2.1.1.170"/>
    </reaction>
</comment>
<comment type="subcellular location">
    <subcellularLocation>
        <location evidence="1">Cytoplasm</location>
    </subcellularLocation>
</comment>
<comment type="similarity">
    <text evidence="1">Belongs to the methyltransferase superfamily. RNA methyltransferase RsmG family.</text>
</comment>
<gene>
    <name evidence="1" type="primary">rsmG</name>
    <name type="ordered locus">mma_3638</name>
</gene>
<accession>A6T481</accession>
<protein>
    <recommendedName>
        <fullName evidence="1">Ribosomal RNA small subunit methyltransferase G</fullName>
        <ecNumber evidence="1">2.1.1.170</ecNumber>
    </recommendedName>
    <alternativeName>
        <fullName evidence="1">16S rRNA 7-methylguanosine methyltransferase</fullName>
        <shortName evidence="1">16S rRNA m7G methyltransferase</shortName>
    </alternativeName>
</protein>
<keyword id="KW-0963">Cytoplasm</keyword>
<keyword id="KW-0489">Methyltransferase</keyword>
<keyword id="KW-0698">rRNA processing</keyword>
<keyword id="KW-0949">S-adenosyl-L-methionine</keyword>
<keyword id="KW-0808">Transferase</keyword>
<sequence length="220" mass="24102">MKAFDRPALTVLLVQGARDLSLNLSEAQITKLIDYLALMAKWNSVYNLTAVRDPVQMVTQHLLDSLAAVSAFSNAKNVLDVGAGGGLPGIVLAIWAAEAHPEMRISMIDTVHKKTAFLTQVKAELNLSNVSVYTARVEQWQAPQKFDVITSRAFADLSDFVNWSEHLLADGGQYIALKGVAPDTEVAGLPAGWQVREVRALQVPTLQAERHLVFIERTVL</sequence>
<dbReference type="EC" id="2.1.1.170" evidence="1"/>
<dbReference type="EMBL" id="CP000269">
    <property type="protein sequence ID" value="ABR88439.1"/>
    <property type="molecule type" value="Genomic_DNA"/>
</dbReference>
<dbReference type="RefSeq" id="WP_012081473.1">
    <property type="nucleotide sequence ID" value="NC_009659.1"/>
</dbReference>
<dbReference type="SMR" id="A6T481"/>
<dbReference type="STRING" id="375286.mma_3638"/>
<dbReference type="KEGG" id="mms:mma_3638"/>
<dbReference type="eggNOG" id="COG0357">
    <property type="taxonomic scope" value="Bacteria"/>
</dbReference>
<dbReference type="HOGENOM" id="CLU_065341_2_0_4"/>
<dbReference type="OrthoDB" id="9808773at2"/>
<dbReference type="Proteomes" id="UP000006388">
    <property type="component" value="Chromosome"/>
</dbReference>
<dbReference type="GO" id="GO:0005829">
    <property type="term" value="C:cytosol"/>
    <property type="evidence" value="ECO:0007669"/>
    <property type="project" value="TreeGrafter"/>
</dbReference>
<dbReference type="GO" id="GO:0070043">
    <property type="term" value="F:rRNA (guanine-N7-)-methyltransferase activity"/>
    <property type="evidence" value="ECO:0007669"/>
    <property type="project" value="UniProtKB-UniRule"/>
</dbReference>
<dbReference type="CDD" id="cd02440">
    <property type="entry name" value="AdoMet_MTases"/>
    <property type="match status" value="1"/>
</dbReference>
<dbReference type="Gene3D" id="3.40.50.150">
    <property type="entry name" value="Vaccinia Virus protein VP39"/>
    <property type="match status" value="1"/>
</dbReference>
<dbReference type="HAMAP" id="MF_00074">
    <property type="entry name" value="16SrRNA_methyltr_G"/>
    <property type="match status" value="1"/>
</dbReference>
<dbReference type="InterPro" id="IPR003682">
    <property type="entry name" value="rRNA_ssu_MeTfrase_G"/>
</dbReference>
<dbReference type="InterPro" id="IPR029063">
    <property type="entry name" value="SAM-dependent_MTases_sf"/>
</dbReference>
<dbReference type="NCBIfam" id="TIGR00138">
    <property type="entry name" value="rsmG_gidB"/>
    <property type="match status" value="1"/>
</dbReference>
<dbReference type="PANTHER" id="PTHR31760">
    <property type="entry name" value="S-ADENOSYL-L-METHIONINE-DEPENDENT METHYLTRANSFERASES SUPERFAMILY PROTEIN"/>
    <property type="match status" value="1"/>
</dbReference>
<dbReference type="PANTHER" id="PTHR31760:SF0">
    <property type="entry name" value="S-ADENOSYL-L-METHIONINE-DEPENDENT METHYLTRANSFERASES SUPERFAMILY PROTEIN"/>
    <property type="match status" value="1"/>
</dbReference>
<dbReference type="Pfam" id="PF02527">
    <property type="entry name" value="GidB"/>
    <property type="match status" value="1"/>
</dbReference>
<dbReference type="PIRSF" id="PIRSF003078">
    <property type="entry name" value="GidB"/>
    <property type="match status" value="1"/>
</dbReference>
<dbReference type="SUPFAM" id="SSF53335">
    <property type="entry name" value="S-adenosyl-L-methionine-dependent methyltransferases"/>
    <property type="match status" value="1"/>
</dbReference>